<reference key="1">
    <citation type="submission" date="1998-01" db="EMBL/GenBank/DDBJ databases">
        <title>CYP2K4: a new cytochrome P450 isoform from male trunk kidney of post-spawning rainbow trout.</title>
        <authorList>
            <person name="Yang Y.-H."/>
            <person name="Andersson T.B."/>
            <person name="Ryu B.-W."/>
            <person name="Wang J.-L."/>
            <person name="Buhler D.R."/>
        </authorList>
    </citation>
    <scope>NUCLEOTIDE SEQUENCE [MRNA]</scope>
    <source>
        <tissue>Kidney</tissue>
    </source>
</reference>
<proteinExistence type="evidence at transcript level"/>
<feature type="chain" id="PRO_0000051775" description="Cytochrome P450 2K4">
    <location>
        <begin position="1"/>
        <end position="504"/>
    </location>
</feature>
<feature type="binding site" description="axial binding residue" evidence="1">
    <location>
        <position position="447"/>
    </location>
    <ligand>
        <name>heme</name>
        <dbReference type="ChEBI" id="CHEBI:30413"/>
    </ligand>
    <ligandPart>
        <name>Fe</name>
        <dbReference type="ChEBI" id="CHEBI:18248"/>
    </ligandPart>
</feature>
<evidence type="ECO:0000250" key="1"/>
<evidence type="ECO:0000305" key="2"/>
<protein>
    <recommendedName>
        <fullName>Cytochrome P450 2K4</fullName>
        <ecNumber>1.14.14.1</ecNumber>
    </recommendedName>
    <alternativeName>
        <fullName>CYPIIK4</fullName>
    </alternativeName>
</protein>
<keyword id="KW-0256">Endoplasmic reticulum</keyword>
<keyword id="KW-0349">Heme</keyword>
<keyword id="KW-0408">Iron</keyword>
<keyword id="KW-0472">Membrane</keyword>
<keyword id="KW-0479">Metal-binding</keyword>
<keyword id="KW-0492">Microsome</keyword>
<keyword id="KW-0503">Monooxygenase</keyword>
<keyword id="KW-0560">Oxidoreductase</keyword>
<sequence length="504" mass="56734">MSLIEGLLQTSSTVTLLGTVLFLLVPYLRSSGSSSEEQGKEPPGPRPLPLLGNMLQLDLKKPYCTLCELSKKYGSIFTVHFGSKKVVVLAGYKTVKQALVNQAEDFGERDITPAFYDFNQGHGILFTNGDSWKEMRRFALTNLRDFGMGKKGSEEKILEEIPYLIEVLEKHEGKAFDTTQSVHHAVSNIISAIVYGSRFEYTDPLFTGMVDRVNENVHLIGSASIQMYNMFPWLGPWINNLTRLKKNVADLKMEVIELVRGLKETLNPHMCRGFVDSFLVRKQTLEESGKMDSFYHDDNLLFSIGNLFGAGTDTTGTTLRWGLLLMAKYPHIQDQVQEEISRVIGSRQTLVEDRKNLPYTDAVIHETQRLANISPMAVPHTTSRDVTFQGYFIKKGTSVIPLLMSVLQDDNEWESPNTFNPSHFLDEQGGFVKRDAFMAFSAGRRVCLGEGLARMELFLFFTSLLQRFRFSPPPGVTEDDLDLTPLLGFTLHPSPHQLCAVSRV</sequence>
<comment type="catalytic activity">
    <reaction>
        <text>an organic molecule + reduced [NADPH--hemoprotein reductase] + O2 = an alcohol + oxidized [NADPH--hemoprotein reductase] + H2O + H(+)</text>
        <dbReference type="Rhea" id="RHEA:17149"/>
        <dbReference type="Rhea" id="RHEA-COMP:11964"/>
        <dbReference type="Rhea" id="RHEA-COMP:11965"/>
        <dbReference type="ChEBI" id="CHEBI:15377"/>
        <dbReference type="ChEBI" id="CHEBI:15378"/>
        <dbReference type="ChEBI" id="CHEBI:15379"/>
        <dbReference type="ChEBI" id="CHEBI:30879"/>
        <dbReference type="ChEBI" id="CHEBI:57618"/>
        <dbReference type="ChEBI" id="CHEBI:58210"/>
        <dbReference type="ChEBI" id="CHEBI:142491"/>
        <dbReference type="EC" id="1.14.14.1"/>
    </reaction>
</comment>
<comment type="cofactor">
    <cofactor evidence="1">
        <name>heme</name>
        <dbReference type="ChEBI" id="CHEBI:30413"/>
    </cofactor>
</comment>
<comment type="subcellular location">
    <subcellularLocation>
        <location evidence="1">Endoplasmic reticulum membrane</location>
        <topology evidence="1">Peripheral membrane protein</topology>
    </subcellularLocation>
    <subcellularLocation>
        <location evidence="1">Microsome membrane</location>
        <topology evidence="1">Peripheral membrane protein</topology>
    </subcellularLocation>
</comment>
<comment type="similarity">
    <text evidence="2">Belongs to the cytochrome P450 family.</text>
</comment>
<dbReference type="EC" id="1.14.14.1"/>
<dbReference type="EMBL" id="AF043296">
    <property type="protein sequence ID" value="AAC26492.1"/>
    <property type="molecule type" value="mRNA"/>
</dbReference>
<dbReference type="RefSeq" id="NP_001118227.1">
    <property type="nucleotide sequence ID" value="NM_001124755.1"/>
</dbReference>
<dbReference type="SMR" id="O93297"/>
<dbReference type="GeneID" id="100142633"/>
<dbReference type="KEGG" id="omy:100142633"/>
<dbReference type="CTD" id="100142633"/>
<dbReference type="OrthoDB" id="2789670at2759"/>
<dbReference type="Proteomes" id="UP000694395">
    <property type="component" value="Unplaced"/>
</dbReference>
<dbReference type="GO" id="GO:0005789">
    <property type="term" value="C:endoplasmic reticulum membrane"/>
    <property type="evidence" value="ECO:0007669"/>
    <property type="project" value="UniProtKB-SubCell"/>
</dbReference>
<dbReference type="GO" id="GO:0020037">
    <property type="term" value="F:heme binding"/>
    <property type="evidence" value="ECO:0007669"/>
    <property type="project" value="InterPro"/>
</dbReference>
<dbReference type="GO" id="GO:0005506">
    <property type="term" value="F:iron ion binding"/>
    <property type="evidence" value="ECO:0007669"/>
    <property type="project" value="InterPro"/>
</dbReference>
<dbReference type="GO" id="GO:0016712">
    <property type="term" value="F:oxidoreductase activity, acting on paired donors, with incorporation or reduction of molecular oxygen, reduced flavin or flavoprotein as one donor, and incorporation of one atom of oxygen"/>
    <property type="evidence" value="ECO:0007669"/>
    <property type="project" value="UniProtKB-EC"/>
</dbReference>
<dbReference type="GO" id="GO:0006082">
    <property type="term" value="P:organic acid metabolic process"/>
    <property type="evidence" value="ECO:0007669"/>
    <property type="project" value="TreeGrafter"/>
</dbReference>
<dbReference type="GO" id="GO:0006805">
    <property type="term" value="P:xenobiotic metabolic process"/>
    <property type="evidence" value="ECO:0007669"/>
    <property type="project" value="TreeGrafter"/>
</dbReference>
<dbReference type="FunFam" id="1.10.630.10:FF:000010">
    <property type="entry name" value="cytochrome P450 2W1 isoform X2"/>
    <property type="match status" value="1"/>
</dbReference>
<dbReference type="Gene3D" id="1.10.630.10">
    <property type="entry name" value="Cytochrome P450"/>
    <property type="match status" value="1"/>
</dbReference>
<dbReference type="InterPro" id="IPR001128">
    <property type="entry name" value="Cyt_P450"/>
</dbReference>
<dbReference type="InterPro" id="IPR017972">
    <property type="entry name" value="Cyt_P450_CS"/>
</dbReference>
<dbReference type="InterPro" id="IPR002401">
    <property type="entry name" value="Cyt_P450_E_grp-I"/>
</dbReference>
<dbReference type="InterPro" id="IPR036396">
    <property type="entry name" value="Cyt_P450_sf"/>
</dbReference>
<dbReference type="InterPro" id="IPR050182">
    <property type="entry name" value="Cytochrome_P450_fam2"/>
</dbReference>
<dbReference type="PANTHER" id="PTHR24300">
    <property type="entry name" value="CYTOCHROME P450 508A4-RELATED"/>
    <property type="match status" value="1"/>
</dbReference>
<dbReference type="PANTHER" id="PTHR24300:SF319">
    <property type="entry name" value="CYTOCHROME P450, FAMILY 2, SUBFAMILY AC, POLYPEPTIDE 1"/>
    <property type="match status" value="1"/>
</dbReference>
<dbReference type="Pfam" id="PF00067">
    <property type="entry name" value="p450"/>
    <property type="match status" value="1"/>
</dbReference>
<dbReference type="PRINTS" id="PR00463">
    <property type="entry name" value="EP450I"/>
</dbReference>
<dbReference type="PRINTS" id="PR00385">
    <property type="entry name" value="P450"/>
</dbReference>
<dbReference type="SUPFAM" id="SSF48264">
    <property type="entry name" value="Cytochrome P450"/>
    <property type="match status" value="1"/>
</dbReference>
<dbReference type="PROSITE" id="PS00086">
    <property type="entry name" value="CYTOCHROME_P450"/>
    <property type="match status" value="1"/>
</dbReference>
<accession>O93297</accession>
<organism>
    <name type="scientific">Oncorhynchus mykiss</name>
    <name type="common">Rainbow trout</name>
    <name type="synonym">Salmo gairdneri</name>
    <dbReference type="NCBI Taxonomy" id="8022"/>
    <lineage>
        <taxon>Eukaryota</taxon>
        <taxon>Metazoa</taxon>
        <taxon>Chordata</taxon>
        <taxon>Craniata</taxon>
        <taxon>Vertebrata</taxon>
        <taxon>Euteleostomi</taxon>
        <taxon>Actinopterygii</taxon>
        <taxon>Neopterygii</taxon>
        <taxon>Teleostei</taxon>
        <taxon>Protacanthopterygii</taxon>
        <taxon>Salmoniformes</taxon>
        <taxon>Salmonidae</taxon>
        <taxon>Salmoninae</taxon>
        <taxon>Oncorhynchus</taxon>
    </lineage>
</organism>
<name>CP2K4_ONCMY</name>
<gene>
    <name type="primary">cyp2k4</name>
</gene>